<feature type="chain" id="PRO_1000003934" description="Small ribosomal subunit protein uS2">
    <location>
        <begin position="1"/>
        <end position="233"/>
    </location>
</feature>
<name>RS2_CLOBH</name>
<evidence type="ECO:0000255" key="1">
    <source>
        <dbReference type="HAMAP-Rule" id="MF_00291"/>
    </source>
</evidence>
<evidence type="ECO:0000305" key="2"/>
<comment type="similarity">
    <text evidence="1">Belongs to the universal ribosomal protein uS2 family.</text>
</comment>
<proteinExistence type="inferred from homology"/>
<keyword id="KW-1185">Reference proteome</keyword>
<keyword id="KW-0687">Ribonucleoprotein</keyword>
<keyword id="KW-0689">Ribosomal protein</keyword>
<organism>
    <name type="scientific">Clostridium botulinum (strain Hall / ATCC 3502 / NCTC 13319 / Type A)</name>
    <dbReference type="NCBI Taxonomy" id="441771"/>
    <lineage>
        <taxon>Bacteria</taxon>
        <taxon>Bacillati</taxon>
        <taxon>Bacillota</taxon>
        <taxon>Clostridia</taxon>
        <taxon>Eubacteriales</taxon>
        <taxon>Clostridiaceae</taxon>
        <taxon>Clostridium</taxon>
    </lineage>
</organism>
<accession>A5I4L3</accession>
<accession>A7G5R2</accession>
<sequence>MSVISMKQLLEAGVHFGHQTRRWNPKMAPYIFTERNGIYIIDLQKTVKKVEEAYNFLRSVAEEGKDVLFVGTKKQAQEAIEEEAKRSEMHFVNNRWLGGMLTNFTTITARINKLEELDKMEEDGTFEVLPKKEVIKLKNEREKLEKNLGGIRKLDANNVGAMFIVDPRKEKNAILEAKRLGIPVVAIVDTNCDPDEVDFVIPGNDDAIRAVRLIAAKMADAVLEGRQGEQLAE</sequence>
<dbReference type="EMBL" id="CP000727">
    <property type="protein sequence ID" value="ABS38087.1"/>
    <property type="molecule type" value="Genomic_DNA"/>
</dbReference>
<dbReference type="EMBL" id="AM412317">
    <property type="protein sequence ID" value="CAL83985.1"/>
    <property type="molecule type" value="Genomic_DNA"/>
</dbReference>
<dbReference type="RefSeq" id="WP_003362578.1">
    <property type="nucleotide sequence ID" value="NC_009698.1"/>
</dbReference>
<dbReference type="RefSeq" id="YP_001254934.1">
    <property type="nucleotide sequence ID" value="NC_009495.1"/>
</dbReference>
<dbReference type="RefSeq" id="YP_001388127.1">
    <property type="nucleotide sequence ID" value="NC_009698.1"/>
</dbReference>
<dbReference type="SMR" id="A5I4L3"/>
<dbReference type="GeneID" id="5186690"/>
<dbReference type="KEGG" id="cbh:CLC_2283"/>
<dbReference type="KEGG" id="cbo:CBO2435"/>
<dbReference type="PATRIC" id="fig|413999.7.peg.2412"/>
<dbReference type="HOGENOM" id="CLU_040318_1_2_9"/>
<dbReference type="PRO" id="PR:A5I4L3"/>
<dbReference type="Proteomes" id="UP000001986">
    <property type="component" value="Chromosome"/>
</dbReference>
<dbReference type="GO" id="GO:0022627">
    <property type="term" value="C:cytosolic small ribosomal subunit"/>
    <property type="evidence" value="ECO:0000318"/>
    <property type="project" value="GO_Central"/>
</dbReference>
<dbReference type="GO" id="GO:0003735">
    <property type="term" value="F:structural constituent of ribosome"/>
    <property type="evidence" value="ECO:0000318"/>
    <property type="project" value="GO_Central"/>
</dbReference>
<dbReference type="GO" id="GO:0006412">
    <property type="term" value="P:translation"/>
    <property type="evidence" value="ECO:0007669"/>
    <property type="project" value="UniProtKB-UniRule"/>
</dbReference>
<dbReference type="CDD" id="cd01425">
    <property type="entry name" value="RPS2"/>
    <property type="match status" value="1"/>
</dbReference>
<dbReference type="FunFam" id="1.10.287.610:FF:000001">
    <property type="entry name" value="30S ribosomal protein S2"/>
    <property type="match status" value="1"/>
</dbReference>
<dbReference type="Gene3D" id="3.40.50.10490">
    <property type="entry name" value="Glucose-6-phosphate isomerase like protein, domain 1"/>
    <property type="match status" value="1"/>
</dbReference>
<dbReference type="Gene3D" id="1.10.287.610">
    <property type="entry name" value="Helix hairpin bin"/>
    <property type="match status" value="1"/>
</dbReference>
<dbReference type="HAMAP" id="MF_00291_B">
    <property type="entry name" value="Ribosomal_uS2_B"/>
    <property type="match status" value="1"/>
</dbReference>
<dbReference type="InterPro" id="IPR001865">
    <property type="entry name" value="Ribosomal_uS2"/>
</dbReference>
<dbReference type="InterPro" id="IPR005706">
    <property type="entry name" value="Ribosomal_uS2_bac/mit/plastid"/>
</dbReference>
<dbReference type="InterPro" id="IPR018130">
    <property type="entry name" value="Ribosomal_uS2_CS"/>
</dbReference>
<dbReference type="InterPro" id="IPR023591">
    <property type="entry name" value="Ribosomal_uS2_flav_dom_sf"/>
</dbReference>
<dbReference type="NCBIfam" id="TIGR01011">
    <property type="entry name" value="rpsB_bact"/>
    <property type="match status" value="1"/>
</dbReference>
<dbReference type="PANTHER" id="PTHR12534">
    <property type="entry name" value="30S RIBOSOMAL PROTEIN S2 PROKARYOTIC AND ORGANELLAR"/>
    <property type="match status" value="1"/>
</dbReference>
<dbReference type="PANTHER" id="PTHR12534:SF0">
    <property type="entry name" value="SMALL RIBOSOMAL SUBUNIT PROTEIN US2M"/>
    <property type="match status" value="1"/>
</dbReference>
<dbReference type="Pfam" id="PF00318">
    <property type="entry name" value="Ribosomal_S2"/>
    <property type="match status" value="1"/>
</dbReference>
<dbReference type="PRINTS" id="PR00395">
    <property type="entry name" value="RIBOSOMALS2"/>
</dbReference>
<dbReference type="SUPFAM" id="SSF52313">
    <property type="entry name" value="Ribosomal protein S2"/>
    <property type="match status" value="1"/>
</dbReference>
<dbReference type="PROSITE" id="PS00962">
    <property type="entry name" value="RIBOSOMAL_S2_1"/>
    <property type="match status" value="1"/>
</dbReference>
<protein>
    <recommendedName>
        <fullName evidence="1">Small ribosomal subunit protein uS2</fullName>
    </recommendedName>
    <alternativeName>
        <fullName evidence="2">30S ribosomal protein S2</fullName>
    </alternativeName>
</protein>
<gene>
    <name evidence="1" type="primary">rpsB</name>
    <name type="ordered locus">CBO2435</name>
    <name type="ordered locus">CLC_2283</name>
</gene>
<reference key="1">
    <citation type="journal article" date="2007" name="Genome Res.">
        <title>Genome sequence of a proteolytic (Group I) Clostridium botulinum strain Hall A and comparative analysis of the clostridial genomes.</title>
        <authorList>
            <person name="Sebaihia M."/>
            <person name="Peck M.W."/>
            <person name="Minton N.P."/>
            <person name="Thomson N.R."/>
            <person name="Holden M.T.G."/>
            <person name="Mitchell W.J."/>
            <person name="Carter A.T."/>
            <person name="Bentley S.D."/>
            <person name="Mason D.R."/>
            <person name="Crossman L."/>
            <person name="Paul C.J."/>
            <person name="Ivens A."/>
            <person name="Wells-Bennik M.H.J."/>
            <person name="Davis I.J."/>
            <person name="Cerdeno-Tarraga A.M."/>
            <person name="Churcher C."/>
            <person name="Quail M.A."/>
            <person name="Chillingworth T."/>
            <person name="Feltwell T."/>
            <person name="Fraser A."/>
            <person name="Goodhead I."/>
            <person name="Hance Z."/>
            <person name="Jagels K."/>
            <person name="Larke N."/>
            <person name="Maddison M."/>
            <person name="Moule S."/>
            <person name="Mungall K."/>
            <person name="Norbertczak H."/>
            <person name="Rabbinowitsch E."/>
            <person name="Sanders M."/>
            <person name="Simmonds M."/>
            <person name="White B."/>
            <person name="Whithead S."/>
            <person name="Parkhill J."/>
        </authorList>
    </citation>
    <scope>NUCLEOTIDE SEQUENCE [LARGE SCALE GENOMIC DNA]</scope>
    <source>
        <strain>Hall / ATCC 3502 / NCTC 13319 / Type A</strain>
    </source>
</reference>
<reference key="2">
    <citation type="journal article" date="2007" name="PLoS ONE">
        <title>Analysis of the neurotoxin complex genes in Clostridium botulinum A1-A4 and B1 strains: BoNT/A3, /Ba4 and /B1 clusters are located within plasmids.</title>
        <authorList>
            <person name="Smith T.J."/>
            <person name="Hill K.K."/>
            <person name="Foley B.T."/>
            <person name="Detter J.C."/>
            <person name="Munk A.C."/>
            <person name="Bruce D.C."/>
            <person name="Doggett N.A."/>
            <person name="Smith L.A."/>
            <person name="Marks J.D."/>
            <person name="Xie G."/>
            <person name="Brettin T.S."/>
        </authorList>
    </citation>
    <scope>NUCLEOTIDE SEQUENCE [LARGE SCALE GENOMIC DNA]</scope>
    <source>
        <strain>Hall / ATCC 3502 / NCTC 13319 / Type A</strain>
    </source>
</reference>